<protein>
    <recommendedName>
        <fullName evidence="1">Glutamine--fructose-6-phosphate aminotransferase [isomerizing]</fullName>
        <ecNumber evidence="1">2.6.1.16</ecNumber>
    </recommendedName>
    <alternativeName>
        <fullName evidence="1">D-fructose-6-phosphate amidotransferase</fullName>
    </alternativeName>
    <alternativeName>
        <fullName evidence="1">GFAT</fullName>
    </alternativeName>
    <alternativeName>
        <fullName evidence="1">Glucosamine-6-phosphate synthase</fullName>
    </alternativeName>
    <alternativeName>
        <fullName evidence="1">Hexosephosphate aminotransferase</fullName>
    </alternativeName>
    <alternativeName>
        <fullName evidence="1">L-glutamine--D-fructose-6-phosphate amidotransferase</fullName>
    </alternativeName>
</protein>
<feature type="initiator methionine" description="Removed" evidence="1">
    <location>
        <position position="1"/>
    </location>
</feature>
<feature type="chain" id="PRO_0000135386" description="Glutamine--fructose-6-phosphate aminotransferase [isomerizing]">
    <location>
        <begin position="2"/>
        <end position="601"/>
    </location>
</feature>
<feature type="domain" description="Glutamine amidotransferase type-2" evidence="1">
    <location>
        <begin position="2"/>
        <end position="218"/>
    </location>
</feature>
<feature type="domain" description="SIS 1" evidence="1">
    <location>
        <begin position="284"/>
        <end position="423"/>
    </location>
</feature>
<feature type="domain" description="SIS 2" evidence="1">
    <location>
        <begin position="453"/>
        <end position="591"/>
    </location>
</feature>
<feature type="active site" description="Nucleophile; for GATase activity" evidence="1">
    <location>
        <position position="2"/>
    </location>
</feature>
<feature type="active site" description="For Fru-6P isomerization activity" evidence="1">
    <location>
        <position position="596"/>
    </location>
</feature>
<dbReference type="EC" id="2.6.1.16" evidence="1"/>
<dbReference type="EMBL" id="CP000029">
    <property type="protein sequence ID" value="AAW55105.1"/>
    <property type="molecule type" value="Genomic_DNA"/>
</dbReference>
<dbReference type="RefSeq" id="WP_001829889.1">
    <property type="nucleotide sequence ID" value="NC_002976.3"/>
</dbReference>
<dbReference type="SMR" id="Q5HM69"/>
<dbReference type="STRING" id="176279.SERP1760"/>
<dbReference type="GeneID" id="50018152"/>
<dbReference type="KEGG" id="ser:SERP1760"/>
<dbReference type="eggNOG" id="COG0449">
    <property type="taxonomic scope" value="Bacteria"/>
</dbReference>
<dbReference type="HOGENOM" id="CLU_012520_7_1_9"/>
<dbReference type="Proteomes" id="UP000000531">
    <property type="component" value="Chromosome"/>
</dbReference>
<dbReference type="GO" id="GO:0005829">
    <property type="term" value="C:cytosol"/>
    <property type="evidence" value="ECO:0007669"/>
    <property type="project" value="TreeGrafter"/>
</dbReference>
<dbReference type="GO" id="GO:0097367">
    <property type="term" value="F:carbohydrate derivative binding"/>
    <property type="evidence" value="ECO:0007669"/>
    <property type="project" value="InterPro"/>
</dbReference>
<dbReference type="GO" id="GO:0004360">
    <property type="term" value="F:glutamine-fructose-6-phosphate transaminase (isomerizing) activity"/>
    <property type="evidence" value="ECO:0007669"/>
    <property type="project" value="UniProtKB-UniRule"/>
</dbReference>
<dbReference type="GO" id="GO:0005975">
    <property type="term" value="P:carbohydrate metabolic process"/>
    <property type="evidence" value="ECO:0007669"/>
    <property type="project" value="UniProtKB-UniRule"/>
</dbReference>
<dbReference type="GO" id="GO:0006002">
    <property type="term" value="P:fructose 6-phosphate metabolic process"/>
    <property type="evidence" value="ECO:0007669"/>
    <property type="project" value="TreeGrafter"/>
</dbReference>
<dbReference type="GO" id="GO:0006487">
    <property type="term" value="P:protein N-linked glycosylation"/>
    <property type="evidence" value="ECO:0007669"/>
    <property type="project" value="TreeGrafter"/>
</dbReference>
<dbReference type="GO" id="GO:0006047">
    <property type="term" value="P:UDP-N-acetylglucosamine metabolic process"/>
    <property type="evidence" value="ECO:0007669"/>
    <property type="project" value="TreeGrafter"/>
</dbReference>
<dbReference type="CDD" id="cd00714">
    <property type="entry name" value="GFAT"/>
    <property type="match status" value="1"/>
</dbReference>
<dbReference type="CDD" id="cd05008">
    <property type="entry name" value="SIS_GlmS_GlmD_1"/>
    <property type="match status" value="1"/>
</dbReference>
<dbReference type="CDD" id="cd05009">
    <property type="entry name" value="SIS_GlmS_GlmD_2"/>
    <property type="match status" value="1"/>
</dbReference>
<dbReference type="FunFam" id="3.40.50.10490:FF:000001">
    <property type="entry name" value="Glutamine--fructose-6-phosphate aminotransferase [isomerizing]"/>
    <property type="match status" value="1"/>
</dbReference>
<dbReference type="FunFam" id="3.40.50.10490:FF:000022">
    <property type="entry name" value="Glutamine--fructose-6-phosphate aminotransferase [isomerizing]"/>
    <property type="match status" value="1"/>
</dbReference>
<dbReference type="FunFam" id="3.60.20.10:FF:000006">
    <property type="entry name" value="Glutamine--fructose-6-phosphate aminotransferase [isomerizing]"/>
    <property type="match status" value="1"/>
</dbReference>
<dbReference type="Gene3D" id="3.40.50.10490">
    <property type="entry name" value="Glucose-6-phosphate isomerase like protein, domain 1"/>
    <property type="match status" value="2"/>
</dbReference>
<dbReference type="Gene3D" id="3.60.20.10">
    <property type="entry name" value="Glutamine Phosphoribosylpyrophosphate, subunit 1, domain 1"/>
    <property type="match status" value="1"/>
</dbReference>
<dbReference type="HAMAP" id="MF_00164">
    <property type="entry name" value="GlmS"/>
    <property type="match status" value="1"/>
</dbReference>
<dbReference type="InterPro" id="IPR017932">
    <property type="entry name" value="GATase_2_dom"/>
</dbReference>
<dbReference type="InterPro" id="IPR005855">
    <property type="entry name" value="GFAT"/>
</dbReference>
<dbReference type="InterPro" id="IPR047084">
    <property type="entry name" value="GFAT_N"/>
</dbReference>
<dbReference type="InterPro" id="IPR035466">
    <property type="entry name" value="GlmS/AgaS_SIS"/>
</dbReference>
<dbReference type="InterPro" id="IPR035490">
    <property type="entry name" value="GlmS/FrlB_SIS"/>
</dbReference>
<dbReference type="InterPro" id="IPR029055">
    <property type="entry name" value="Ntn_hydrolases_N"/>
</dbReference>
<dbReference type="InterPro" id="IPR001347">
    <property type="entry name" value="SIS_dom"/>
</dbReference>
<dbReference type="InterPro" id="IPR046348">
    <property type="entry name" value="SIS_dom_sf"/>
</dbReference>
<dbReference type="NCBIfam" id="TIGR01135">
    <property type="entry name" value="glmS"/>
    <property type="match status" value="1"/>
</dbReference>
<dbReference type="NCBIfam" id="NF001484">
    <property type="entry name" value="PRK00331.1"/>
    <property type="match status" value="1"/>
</dbReference>
<dbReference type="PANTHER" id="PTHR10937">
    <property type="entry name" value="GLUCOSAMINE--FRUCTOSE-6-PHOSPHATE AMINOTRANSFERASE, ISOMERIZING"/>
    <property type="match status" value="1"/>
</dbReference>
<dbReference type="PANTHER" id="PTHR10937:SF0">
    <property type="entry name" value="GLUTAMINE--FRUCTOSE-6-PHOSPHATE TRANSAMINASE (ISOMERIZING)"/>
    <property type="match status" value="1"/>
</dbReference>
<dbReference type="Pfam" id="PF13522">
    <property type="entry name" value="GATase_6"/>
    <property type="match status" value="1"/>
</dbReference>
<dbReference type="Pfam" id="PF01380">
    <property type="entry name" value="SIS"/>
    <property type="match status" value="2"/>
</dbReference>
<dbReference type="SUPFAM" id="SSF56235">
    <property type="entry name" value="N-terminal nucleophile aminohydrolases (Ntn hydrolases)"/>
    <property type="match status" value="1"/>
</dbReference>
<dbReference type="SUPFAM" id="SSF53697">
    <property type="entry name" value="SIS domain"/>
    <property type="match status" value="1"/>
</dbReference>
<dbReference type="PROSITE" id="PS51278">
    <property type="entry name" value="GATASE_TYPE_2"/>
    <property type="match status" value="1"/>
</dbReference>
<dbReference type="PROSITE" id="PS51464">
    <property type="entry name" value="SIS"/>
    <property type="match status" value="2"/>
</dbReference>
<evidence type="ECO:0000255" key="1">
    <source>
        <dbReference type="HAMAP-Rule" id="MF_00164"/>
    </source>
</evidence>
<organism>
    <name type="scientific">Staphylococcus epidermidis (strain ATCC 35984 / DSM 28319 / BCRC 17069 / CCUG 31568 / BM 3577 / RP62A)</name>
    <dbReference type="NCBI Taxonomy" id="176279"/>
    <lineage>
        <taxon>Bacteria</taxon>
        <taxon>Bacillati</taxon>
        <taxon>Bacillota</taxon>
        <taxon>Bacilli</taxon>
        <taxon>Bacillales</taxon>
        <taxon>Staphylococcaceae</taxon>
        <taxon>Staphylococcus</taxon>
    </lineage>
</organism>
<reference key="1">
    <citation type="journal article" date="2005" name="J. Bacteriol.">
        <title>Insights on evolution of virulence and resistance from the complete genome analysis of an early methicillin-resistant Staphylococcus aureus strain and a biofilm-producing methicillin-resistant Staphylococcus epidermidis strain.</title>
        <authorList>
            <person name="Gill S.R."/>
            <person name="Fouts D.E."/>
            <person name="Archer G.L."/>
            <person name="Mongodin E.F."/>
            <person name="DeBoy R.T."/>
            <person name="Ravel J."/>
            <person name="Paulsen I.T."/>
            <person name="Kolonay J.F."/>
            <person name="Brinkac L.M."/>
            <person name="Beanan M.J."/>
            <person name="Dodson R.J."/>
            <person name="Daugherty S.C."/>
            <person name="Madupu R."/>
            <person name="Angiuoli S.V."/>
            <person name="Durkin A.S."/>
            <person name="Haft D.H."/>
            <person name="Vamathevan J.J."/>
            <person name="Khouri H."/>
            <person name="Utterback T.R."/>
            <person name="Lee C."/>
            <person name="Dimitrov G."/>
            <person name="Jiang L."/>
            <person name="Qin H."/>
            <person name="Weidman J."/>
            <person name="Tran K."/>
            <person name="Kang K.H."/>
            <person name="Hance I.R."/>
            <person name="Nelson K.E."/>
            <person name="Fraser C.M."/>
        </authorList>
    </citation>
    <scope>NUCLEOTIDE SEQUENCE [LARGE SCALE GENOMIC DNA]</scope>
    <source>
        <strain>ATCC 35984 / DSM 28319 / BCRC 17069 / CCUG 31568 / BM 3577 / RP62A</strain>
    </source>
</reference>
<proteinExistence type="inferred from homology"/>
<accession>Q5HM69</accession>
<sequence length="601" mass="66237">MCGIVGYIGYDNAKELLLKGLEKLEYRGYDSAGIAVVNDDGTKLFKEKGRIAELRKVADNSDEDGTLGIGHTRWATHGVPNYENSHPHQSTSGRFTLVHNGVIENYEELKAEYLSDVTFSSETDTEVIVQLVDYFSRQGLATEDAFTKVVKLLHGSYALGLLDDNDKDTIYVAKNKSPLLVGVGEGFNVIASDALAMLQTTNQYKEIHDHEIVIVKRDTVEIKDLEGHIQQRDTYTAEIDAADAEKGVYDHYMLKEIHEQPAVMRRIIQEYQDEKGNLKIDSEIINDVADADRIYIVAAGTSYHAGLVGKEFIEKWAGVPTEVHVASEFVYNMPLLSEKPLFIYISQSGETADSRAVLVETNKLGHKSLTITNVAGSTLSREADHTLLLHAGPEIAVASTKAYTAQIAVLSILSQIVAKNHGRETDVDLLRELAKVTTAIETIVDDAPKMEQIATDFLKTTRNAFFIGRTIDYNVSLEGALKLKEISYIQAEGFAGGELKHGTIALIEDGTPVIGLATQENVNLSIRGNMKEVVARGAYPCMISMEGLNKEGDTYVIPQVHELLTPLVSVVTMQLISYYAALQRDLDVDKPRNLAKSVTVE</sequence>
<gene>
    <name evidence="1" type="primary">glmS</name>
    <name type="ordered locus">SERP1760</name>
</gene>
<keyword id="KW-0032">Aminotransferase</keyword>
<keyword id="KW-0963">Cytoplasm</keyword>
<keyword id="KW-0315">Glutamine amidotransferase</keyword>
<keyword id="KW-1185">Reference proteome</keyword>
<keyword id="KW-0677">Repeat</keyword>
<keyword id="KW-0808">Transferase</keyword>
<comment type="function">
    <text evidence="1">Catalyzes the first step in hexosamine metabolism, converting fructose-6P into glucosamine-6P using glutamine as a nitrogen source.</text>
</comment>
<comment type="catalytic activity">
    <reaction evidence="1">
        <text>D-fructose 6-phosphate + L-glutamine = D-glucosamine 6-phosphate + L-glutamate</text>
        <dbReference type="Rhea" id="RHEA:13237"/>
        <dbReference type="ChEBI" id="CHEBI:29985"/>
        <dbReference type="ChEBI" id="CHEBI:58359"/>
        <dbReference type="ChEBI" id="CHEBI:58725"/>
        <dbReference type="ChEBI" id="CHEBI:61527"/>
        <dbReference type="EC" id="2.6.1.16"/>
    </reaction>
</comment>
<comment type="subunit">
    <text evidence="1">Homodimer.</text>
</comment>
<comment type="subcellular location">
    <subcellularLocation>
        <location evidence="1">Cytoplasm</location>
    </subcellularLocation>
</comment>
<name>GLMS_STAEQ</name>